<keyword id="KW-0028">Amino-acid biosynthesis</keyword>
<keyword id="KW-0210">Decarboxylase</keyword>
<keyword id="KW-0456">Lyase</keyword>
<keyword id="KW-0457">Lysine biosynthesis</keyword>
<keyword id="KW-0663">Pyridoxal phosphate</keyword>
<gene>
    <name type="primary">lysA</name>
    <name type="ordered locus">ECW_m3083</name>
    <name type="ordered locus">WFL_15045</name>
    <name type="ORF">EschWDRAFT_0728</name>
</gene>
<evidence type="ECO:0000250" key="1"/>
<evidence type="ECO:0000269" key="2">
    <source>
    </source>
</evidence>
<evidence type="ECO:0000305" key="3"/>
<comment type="function">
    <text evidence="2">Specifically catalyzes the decarboxylation of meso-diaminopimelate (meso-DAP) to L-lysine. Is not active against the DD- or LL-isomers of diaminopimelate.</text>
</comment>
<comment type="catalytic activity">
    <reaction evidence="2">
        <text>meso-2,6-diaminopimelate + H(+) = L-lysine + CO2</text>
        <dbReference type="Rhea" id="RHEA:15101"/>
        <dbReference type="ChEBI" id="CHEBI:15378"/>
        <dbReference type="ChEBI" id="CHEBI:16526"/>
        <dbReference type="ChEBI" id="CHEBI:32551"/>
        <dbReference type="ChEBI" id="CHEBI:57791"/>
        <dbReference type="EC" id="4.1.1.20"/>
    </reaction>
</comment>
<comment type="cofactor">
    <cofactor evidence="2">
        <name>pyridoxal 5'-phosphate</name>
        <dbReference type="ChEBI" id="CHEBI:597326"/>
    </cofactor>
</comment>
<comment type="activity regulation">
    <text evidence="2">Is activated by 2,3-dimercaptopropan-1-ol.</text>
</comment>
<comment type="biophysicochemical properties">
    <kinetics>
        <KM evidence="2">1.7 mM for meso-2,6-diaminoheptanedioate (at pH 6.8 and 37 degrees Celsius)</KM>
    </kinetics>
    <phDependence>
        <text evidence="2">Optimum pH is 6.7-6.8.</text>
    </phDependence>
</comment>
<comment type="pathway">
    <text evidence="2">Amino-acid biosynthesis; L-lysine biosynthesis via DAP pathway; L-lysine from DL-2,6-diaminopimelate: step 1/1.</text>
</comment>
<comment type="subunit">
    <text evidence="1">Homodimer.</text>
</comment>
<comment type="similarity">
    <text evidence="3">Belongs to the Orn/Lys/Arg decarboxylase class-II family. LysA subfamily.</text>
</comment>
<feature type="chain" id="PRO_0000411128" description="Diaminopimelate decarboxylase">
    <location>
        <begin position="1"/>
        <end position="420"/>
    </location>
</feature>
<feature type="binding site" evidence="1">
    <location>
        <position position="227"/>
    </location>
    <ligand>
        <name>pyridoxal 5'-phosphate</name>
        <dbReference type="ChEBI" id="CHEBI:597326"/>
    </ligand>
</feature>
<feature type="binding site" evidence="1">
    <location>
        <begin position="268"/>
        <end position="271"/>
    </location>
    <ligand>
        <name>pyridoxal 5'-phosphate</name>
        <dbReference type="ChEBI" id="CHEBI:597326"/>
    </ligand>
</feature>
<feature type="binding site" evidence="1">
    <location>
        <position position="271"/>
    </location>
    <ligand>
        <name>substrate</name>
    </ligand>
</feature>
<feature type="binding site" evidence="1">
    <location>
        <position position="307"/>
    </location>
    <ligand>
        <name>substrate</name>
    </ligand>
</feature>
<feature type="binding site" evidence="1">
    <location>
        <position position="311"/>
    </location>
    <ligand>
        <name>substrate</name>
    </ligand>
</feature>
<feature type="binding site" evidence="1">
    <location>
        <position position="343"/>
    </location>
    <ligand>
        <name>substrate</name>
    </ligand>
</feature>
<feature type="binding site" evidence="1">
    <location>
        <position position="378"/>
    </location>
    <ligand>
        <name>pyridoxal 5'-phosphate</name>
        <dbReference type="ChEBI" id="CHEBI:597326"/>
    </ligand>
</feature>
<feature type="binding site" evidence="1">
    <location>
        <position position="378"/>
    </location>
    <ligand>
        <name>substrate</name>
    </ligand>
</feature>
<feature type="modified residue" description="N6-(pyridoxal phosphate)lysine" evidence="1">
    <location>
        <position position="54"/>
    </location>
</feature>
<dbReference type="EC" id="4.1.1.20"/>
<dbReference type="EMBL" id="AEDF01000002">
    <property type="protein sequence ID" value="EFN39941.1"/>
    <property type="molecule type" value="Genomic_DNA"/>
</dbReference>
<dbReference type="EMBL" id="CP002185">
    <property type="protein sequence ID" value="ADT76472.1"/>
    <property type="molecule type" value="Genomic_DNA"/>
</dbReference>
<dbReference type="EMBL" id="CP002967">
    <property type="protein sequence ID" value="AFH12659.1"/>
    <property type="molecule type" value="Genomic_DNA"/>
</dbReference>
<dbReference type="RefSeq" id="WP_001120711.1">
    <property type="nucleotide sequence ID" value="NZ_WBMH01000034.1"/>
</dbReference>
<dbReference type="SMR" id="E0IWI3"/>
<dbReference type="KEGG" id="ell:WFL_15045"/>
<dbReference type="KEGG" id="elw:ECW_m3083"/>
<dbReference type="PATRIC" id="fig|566546.30.peg.3131"/>
<dbReference type="HOGENOM" id="CLU_026444_0_2_6"/>
<dbReference type="UniPathway" id="UPA00034">
    <property type="reaction ID" value="UER00027"/>
</dbReference>
<dbReference type="Proteomes" id="UP000008525">
    <property type="component" value="Chromosome"/>
</dbReference>
<dbReference type="GO" id="GO:0008836">
    <property type="term" value="F:diaminopimelate decarboxylase activity"/>
    <property type="evidence" value="ECO:0007669"/>
    <property type="project" value="UniProtKB-UniRule"/>
</dbReference>
<dbReference type="GO" id="GO:0030170">
    <property type="term" value="F:pyridoxal phosphate binding"/>
    <property type="evidence" value="ECO:0007669"/>
    <property type="project" value="UniProtKB-UniRule"/>
</dbReference>
<dbReference type="GO" id="GO:0009089">
    <property type="term" value="P:lysine biosynthetic process via diaminopimelate"/>
    <property type="evidence" value="ECO:0007669"/>
    <property type="project" value="UniProtKB-UniRule"/>
</dbReference>
<dbReference type="CDD" id="cd06828">
    <property type="entry name" value="PLPDE_III_DapDC"/>
    <property type="match status" value="1"/>
</dbReference>
<dbReference type="FunFam" id="2.40.37.10:FF:000007">
    <property type="entry name" value="Diaminopimelate decarboxylase"/>
    <property type="match status" value="1"/>
</dbReference>
<dbReference type="FunFam" id="3.20.20.10:FF:000009">
    <property type="entry name" value="Diaminopimelate decarboxylase"/>
    <property type="match status" value="1"/>
</dbReference>
<dbReference type="Gene3D" id="3.20.20.10">
    <property type="entry name" value="Alanine racemase"/>
    <property type="match status" value="1"/>
</dbReference>
<dbReference type="Gene3D" id="2.40.37.10">
    <property type="entry name" value="Lyase, Ornithine Decarboxylase, Chain A, domain 1"/>
    <property type="match status" value="1"/>
</dbReference>
<dbReference type="HAMAP" id="MF_02120">
    <property type="entry name" value="LysA"/>
    <property type="match status" value="1"/>
</dbReference>
<dbReference type="InterPro" id="IPR009006">
    <property type="entry name" value="Ala_racemase/Decarboxylase_C"/>
</dbReference>
<dbReference type="InterPro" id="IPR002986">
    <property type="entry name" value="DAP_deCOOHase_LysA"/>
</dbReference>
<dbReference type="InterPro" id="IPR022643">
    <property type="entry name" value="De-COase2_C"/>
</dbReference>
<dbReference type="InterPro" id="IPR022657">
    <property type="entry name" value="De-COase2_CS"/>
</dbReference>
<dbReference type="InterPro" id="IPR022644">
    <property type="entry name" value="De-COase2_N"/>
</dbReference>
<dbReference type="InterPro" id="IPR022653">
    <property type="entry name" value="De-COase2_pyr-phos_BS"/>
</dbReference>
<dbReference type="InterPro" id="IPR000183">
    <property type="entry name" value="Orn/DAP/Arg_de-COase"/>
</dbReference>
<dbReference type="InterPro" id="IPR029066">
    <property type="entry name" value="PLP-binding_barrel"/>
</dbReference>
<dbReference type="NCBIfam" id="TIGR01048">
    <property type="entry name" value="lysA"/>
    <property type="match status" value="1"/>
</dbReference>
<dbReference type="PANTHER" id="PTHR43727">
    <property type="entry name" value="DIAMINOPIMELATE DECARBOXYLASE"/>
    <property type="match status" value="1"/>
</dbReference>
<dbReference type="PANTHER" id="PTHR43727:SF2">
    <property type="entry name" value="GROUP IV DECARBOXYLASE"/>
    <property type="match status" value="1"/>
</dbReference>
<dbReference type="Pfam" id="PF02784">
    <property type="entry name" value="Orn_Arg_deC_N"/>
    <property type="match status" value="1"/>
</dbReference>
<dbReference type="Pfam" id="PF00278">
    <property type="entry name" value="Orn_DAP_Arg_deC"/>
    <property type="match status" value="1"/>
</dbReference>
<dbReference type="PRINTS" id="PR01181">
    <property type="entry name" value="DAPDCRBXLASE"/>
</dbReference>
<dbReference type="PRINTS" id="PR01179">
    <property type="entry name" value="ODADCRBXLASE"/>
</dbReference>
<dbReference type="SUPFAM" id="SSF50621">
    <property type="entry name" value="Alanine racemase C-terminal domain-like"/>
    <property type="match status" value="1"/>
</dbReference>
<dbReference type="SUPFAM" id="SSF51419">
    <property type="entry name" value="PLP-binding barrel"/>
    <property type="match status" value="1"/>
</dbReference>
<dbReference type="PROSITE" id="PS00878">
    <property type="entry name" value="ODR_DC_2_1"/>
    <property type="match status" value="1"/>
</dbReference>
<dbReference type="PROSITE" id="PS00879">
    <property type="entry name" value="ODR_DC_2_2"/>
    <property type="match status" value="1"/>
</dbReference>
<accession>E0IWI3</accession>
<accession>H9Y5F7</accession>
<reference key="1">
    <citation type="submission" date="2010-07" db="EMBL/GenBank/DDBJ databases">
        <title>The draft genome of Escherichia coli W.</title>
        <authorList>
            <consortium name="US DOE Joint Genome Institute (JGI-PGF)"/>
            <person name="Lucas S."/>
            <person name="Copeland A."/>
            <person name="Lapidus A."/>
            <person name="Cheng J.-F."/>
            <person name="Bruce D."/>
            <person name="Goodwin L."/>
            <person name="Pitluck S."/>
            <person name="Land M.L."/>
            <person name="Hauser L."/>
            <person name="Chang Y.-J."/>
            <person name="Jeffries C."/>
            <person name="Tremaine M."/>
            <person name="Landick R."/>
            <person name="Keating D."/>
            <person name="Woyke T.J."/>
        </authorList>
    </citation>
    <scope>NUCLEOTIDE SEQUENCE [LARGE SCALE GENOMIC DNA]</scope>
    <source>
        <strain>ATCC 9637 / CCM 2024 / DSM 1116 / LMG 11080 / NBRC 13500 / NCIMB 8666 / NRRL B-766 / W</strain>
    </source>
</reference>
<reference key="2">
    <citation type="journal article" date="2011" name="BMC Genomics">
        <title>The genome sequence of E. coli W (ATCC 9637): comparative genome analysis and an improved genome-scale reconstruction of E. coli.</title>
        <authorList>
            <person name="Archer C.T."/>
            <person name="Kim J.F."/>
            <person name="Jeong H."/>
            <person name="Park J.H."/>
            <person name="Vickers C.E."/>
            <person name="Lee S.Y."/>
            <person name="Nielsen L.K."/>
        </authorList>
    </citation>
    <scope>NUCLEOTIDE SEQUENCE [LARGE SCALE GENOMIC DNA]</scope>
    <source>
        <strain>ATCC 9637 / CCM 2024 / DSM 1116 / LMG 11080 / NBRC 13500 / NCIMB 8666 / NRRL B-766 / W</strain>
    </source>
</reference>
<reference key="3">
    <citation type="journal article" date="2012" name="J. Ind. Microbiol. Biotechnol.">
        <title>Optical mapping and sequencing of the Escherichia coli KO11 genome reveal extensive chromosomal rearrangements, and multiple tandem copies of the Zymomonas mobilis pdc and adhB genes.</title>
        <authorList>
            <person name="Turner P.C."/>
            <person name="Yomano L.P."/>
            <person name="Jarboe L.R."/>
            <person name="York S.W."/>
            <person name="Baggett C.L."/>
            <person name="Moritz B.E."/>
            <person name="Zentz E.B."/>
            <person name="Shanmugam K.T."/>
            <person name="Ingram L.O."/>
        </authorList>
    </citation>
    <scope>NUCLEOTIDE SEQUENCE [LARGE SCALE GENOMIC DNA]</scope>
    <source>
        <strain>ATCC 9637 / CCM 2024 / DSM 1116 / LMG 11080 / NBRC 13500 / NCIMB 8666 / NRRL B-766 / W</strain>
    </source>
</reference>
<reference key="4">
    <citation type="journal article" date="1965" name="Biochem. J.">
        <title>Purification and properties of diaminopimelate decarboxylase from Escherichia coli.</title>
        <authorList>
            <person name="White P.J."/>
            <person name="Kelly B."/>
        </authorList>
    </citation>
    <scope>FUNCTION</scope>
    <scope>CATALYTIC ACTIVITY</scope>
    <scope>SUBSTRATE SPECIFICITY</scope>
    <scope>COFACTOR</scope>
    <scope>ACTIVITY REGULATION</scope>
    <scope>BIOPHYSICOCHEMICAL PROPERTIES</scope>
    <scope>PATHWAY</scope>
    <source>
        <strain>ATCC 9637 / CCM 2024 / DSM 1116 / LMG 11080 / NBRC 13500 / NCIMB 8666 / NRRL B-766 / W</strain>
    </source>
</reference>
<proteinExistence type="evidence at protein level"/>
<name>DCDA_ECOLW</name>
<organism>
    <name type="scientific">Escherichia coli (strain ATCC 9637 / CCM 2024 / DSM 1116 / LMG 11080 / NBRC 13500 / NCIMB 8666 / NRRL B-766 / W)</name>
    <dbReference type="NCBI Taxonomy" id="566546"/>
    <lineage>
        <taxon>Bacteria</taxon>
        <taxon>Pseudomonadati</taxon>
        <taxon>Pseudomonadota</taxon>
        <taxon>Gammaproteobacteria</taxon>
        <taxon>Enterobacterales</taxon>
        <taxon>Enterobacteriaceae</taxon>
        <taxon>Escherichia</taxon>
    </lineage>
</organism>
<sequence>MPHSLFSTDTDLTAENLLRLPAEFGCPVWVYDAQIIRRQIAALKQFDVVRFAQKACSNIHILRLMREQGVKVDSVSLGEIERALAAGYNPQTHPDDIVFTADVIDQATLERVSELQIPVNAGSVDMLDQLGQVSPGHRVWLRVNPGFGHGHSQKTNTGGENSKHGIWYTDLPAALDVIQRHHLQLVGIHMHIGSGVDYAHLEQVCGAMVRQVIEFGQDLQAISAGGGLSVPYQQGEEAVDTEHYYGLWNAAREQIARHLGHPVKLEIEPGRFLVAQSGVLITQVRSVKQMGSRHFVLVDAGFNDLMRPAMYGSYHHISALAADGRSLEHAPTVETVVAGPLCESGDVFTQQEGGNVETRALPEVKAGDYLVLHDTGAYGASMSSNYNSRPLLPEVLFDNGQARLIRRRQTIEELLALELL</sequence>
<protein>
    <recommendedName>
        <fullName>Diaminopimelate decarboxylase</fullName>
        <shortName>DAP decarboxylase</shortName>
        <shortName>DAPDC</shortName>
        <ecNumber>4.1.1.20</ecNumber>
    </recommendedName>
</protein>